<accession>P0DMS7</accession>
<accession>A8E0J5</accession>
<accession>B6UQB2</accession>
<accession>T2K1L7</accession>
<comment type="function">
    <text evidence="4">Key player in antiviral response. Induces expression of TLRs, including that of TLR3, TLR9 and TLR8a1, and that of cytosolic pattern recognition receptors, including RIGI, IFIH1/MDA5 and DHX58/LGP2. Also induces MX1 and its own expression. In the presence of intracellular IFNAR2 (iIFNAR2) and IFNAR1B, intracellular isoform 3 may mediate STAT1 and STAT2 phosphorylation and induction of EIF2AK2, MX1 and RSAD2.</text>
</comment>
<comment type="subcellular location">
    <molecule>Isoform 1</molecule>
    <subcellularLocation>
        <location evidence="10">Secreted</location>
    </subcellularLocation>
</comment>
<comment type="subcellular location">
    <molecule>Isoform 2</molecule>
    <subcellularLocation>
        <location evidence="4">Cytoplasm</location>
        <location evidence="4">Cytosol</location>
    </subcellularLocation>
</comment>
<comment type="subcellular location">
    <molecule>Isoform 3</molecule>
    <subcellularLocation>
        <location evidence="4">Cytoplasm</location>
        <location evidence="4">Cytosol</location>
    </subcellularLocation>
</comment>
<comment type="alternative products">
    <event type="alternative splicing"/>
    <isoform>
        <id>P0DMS7-1</id>
        <name>1</name>
        <name>Secreted IFN1</name>
        <name>sIFN1</name>
        <name evidence="6 7">IFN1 short</name>
        <sequence type="displayed"/>
    </isoform>
    <isoform>
        <id>P0DMS7-2</id>
        <name>2</name>
        <name>Intracellular IFN1a</name>
        <name>iIFN1a</name>
        <name evidence="6 7">IFN1 long</name>
        <sequence type="described" ref="VSP_057532"/>
    </isoform>
    <isoform>
        <id>P0DMS7-3</id>
        <name>3</name>
        <name>Intracellular IFN1b</name>
        <name evidence="7">iIFN1b</name>
        <sequence type="described" ref="VSP_057533"/>
    </isoform>
</comment>
<comment type="tissue specificity">
    <text evidence="3">Isoform 1 and isoform 2 are expressed in several tissues, including gill, spleen, intestine, kidney and skin.</text>
</comment>
<comment type="induction">
    <text evidence="3 4">In the RTG-2 fibroblastic cell line, isoform 1 is highly induced by polyinosine-polycytidylic acid (poly(I:C)), a synthetic analog of dsRNA, that binds TLR3. Isoforms 2 and 3 are also up-regulated by poly(I:C), but to a lesser extent. In vivo, all 3 isoforms are induced by poly(I:C) (in anterior kidney leukocytes) and by viral infection, such as that of viral hemorrhagic septicemia virus (VHSV) (isoform 1&gt;isoform 3&gt;&gt;isoform 2) and infectious hematopoietic necrosis virus (IHNV). However, induction kinetics is isoform-specific. Also up-regulated in vivo by a DNA vaccine based on the IHNV glycoprotein.</text>
</comment>
<comment type="miscellaneous">
    <text evidence="11">Salmonid type I IFNs are classified into 2 groups with 2 (group I) or 4 (group II) cysteines in the mature peptide. These groups can be further divided into 3 subgroups (group I IFN1-a, IFN1-d and IFN1-e and group II IFN1-b, IFN1-c and IFN1-f). Each subgroup can be represented by several genes (up to at least 7 for IFN1-e).</text>
</comment>
<comment type="similarity">
    <text evidence="2">Belongs to the alpha/beta interferon family.</text>
</comment>
<proteinExistence type="evidence at transcript level"/>
<keyword id="KW-0025">Alternative splicing</keyword>
<keyword id="KW-0051">Antiviral defense</keyword>
<keyword id="KW-0202">Cytokine</keyword>
<keyword id="KW-0963">Cytoplasm</keyword>
<keyword id="KW-1015">Disulfide bond</keyword>
<keyword id="KW-0964">Secreted</keyword>
<keyword id="KW-0732">Signal</keyword>
<evidence type="ECO:0000255" key="1"/>
<evidence type="ECO:0000255" key="2">
    <source>
        <dbReference type="RuleBase" id="RU000436"/>
    </source>
</evidence>
<evidence type="ECO:0000269" key="3">
    <source>
    </source>
</evidence>
<evidence type="ECO:0000269" key="4">
    <source>
    </source>
</evidence>
<evidence type="ECO:0000303" key="5">
    <source>
    </source>
</evidence>
<evidence type="ECO:0000303" key="6">
    <source>
    </source>
</evidence>
<evidence type="ECO:0000303" key="7">
    <source>
    </source>
</evidence>
<evidence type="ECO:0000303" key="8">
    <source>
    </source>
</evidence>
<evidence type="ECO:0000305" key="9"/>
<evidence type="ECO:0000305" key="10">
    <source>
    </source>
</evidence>
<evidence type="ECO:0000305" key="11">
    <source>
    </source>
</evidence>
<sequence length="175" mass="20847">MYTMQSWSCIFLIICSMQSVCHCCDWIRHHYGHLSAEYLSLLDQMGGDITKQNAPVLFPTSLYRHIDDAEFEDKVIFLKETIYQITKLFDGNMKSVTWDKKNLDDFLNILERQLENLNSCVSPAMKPERRLKRYFKKLNSKVLRKMNYSAQAWELIRKEIKRHLQRLDILAAQMY</sequence>
<organism>
    <name type="scientific">Oncorhynchus mykiss</name>
    <name type="common">Rainbow trout</name>
    <name type="synonym">Salmo gairdneri</name>
    <dbReference type="NCBI Taxonomy" id="8022"/>
    <lineage>
        <taxon>Eukaryota</taxon>
        <taxon>Metazoa</taxon>
        <taxon>Chordata</taxon>
        <taxon>Craniata</taxon>
        <taxon>Vertebrata</taxon>
        <taxon>Euteleostomi</taxon>
        <taxon>Actinopterygii</taxon>
        <taxon>Neopterygii</taxon>
        <taxon>Teleostei</taxon>
        <taxon>Protacanthopterygii</taxon>
        <taxon>Salmoniformes</taxon>
        <taxon>Salmonidae</taxon>
        <taxon>Salmoninae</taxon>
        <taxon>Oncorhynchus</taxon>
    </lineage>
</organism>
<dbReference type="EMBL" id="AM489415">
    <property type="protein sequence ID" value="CAM28538.1"/>
    <property type="molecule type" value="Genomic_DNA"/>
</dbReference>
<dbReference type="EMBL" id="FJ184370">
    <property type="protein sequence ID" value="ACJ03566.1"/>
    <property type="molecule type" value="mRNA"/>
</dbReference>
<dbReference type="EMBL" id="FJ184371">
    <property type="protein sequence ID" value="ACJ03567.1"/>
    <property type="molecule type" value="mRNA"/>
</dbReference>
<dbReference type="EMBL" id="HF931021">
    <property type="protein sequence ID" value="CCV17397.1"/>
    <property type="molecule type" value="Genomic_DNA"/>
</dbReference>
<dbReference type="SMR" id="P0DMS7"/>
<dbReference type="Proteomes" id="UP000694395">
    <property type="component" value="Unplaced"/>
</dbReference>
<dbReference type="GO" id="GO:0005829">
    <property type="term" value="C:cytosol"/>
    <property type="evidence" value="ECO:0000314"/>
    <property type="project" value="AgBase"/>
</dbReference>
<dbReference type="GO" id="GO:0005615">
    <property type="term" value="C:extracellular space"/>
    <property type="evidence" value="ECO:0007669"/>
    <property type="project" value="UniProtKB-KW"/>
</dbReference>
<dbReference type="GO" id="GO:0048471">
    <property type="term" value="C:perinuclear region of cytoplasm"/>
    <property type="evidence" value="ECO:0000314"/>
    <property type="project" value="AgBase"/>
</dbReference>
<dbReference type="GO" id="GO:0005125">
    <property type="term" value="F:cytokine activity"/>
    <property type="evidence" value="ECO:0007669"/>
    <property type="project" value="UniProtKB-KW"/>
</dbReference>
<dbReference type="GO" id="GO:0005126">
    <property type="term" value="F:cytokine receptor binding"/>
    <property type="evidence" value="ECO:0007669"/>
    <property type="project" value="InterPro"/>
</dbReference>
<dbReference type="GO" id="GO:0051607">
    <property type="term" value="P:defense response to virus"/>
    <property type="evidence" value="ECO:0000314"/>
    <property type="project" value="AgBase"/>
</dbReference>
<dbReference type="GO" id="GO:0010628">
    <property type="term" value="P:positive regulation of gene expression"/>
    <property type="evidence" value="ECO:0000314"/>
    <property type="project" value="AgBase"/>
</dbReference>
<dbReference type="GO" id="GO:0001934">
    <property type="term" value="P:positive regulation of protein phosphorylation"/>
    <property type="evidence" value="ECO:0000315"/>
    <property type="project" value="AgBase"/>
</dbReference>
<dbReference type="GO" id="GO:0060337">
    <property type="term" value="P:type I interferon-mediated signaling pathway"/>
    <property type="evidence" value="ECO:0000315"/>
    <property type="project" value="AgBase"/>
</dbReference>
<dbReference type="FunFam" id="1.20.1250.10:FF:000030">
    <property type="entry name" value="Type I interferon"/>
    <property type="match status" value="1"/>
</dbReference>
<dbReference type="Gene3D" id="1.20.1250.10">
    <property type="match status" value="1"/>
</dbReference>
<dbReference type="InterPro" id="IPR009079">
    <property type="entry name" value="4_helix_cytokine-like_core"/>
</dbReference>
<dbReference type="InterPro" id="IPR000471">
    <property type="entry name" value="Interferon_alpha/beta/delta"/>
</dbReference>
<dbReference type="PANTHER" id="PTHR11691:SF73">
    <property type="entry name" value="INTERFERON BETA"/>
    <property type="match status" value="1"/>
</dbReference>
<dbReference type="PANTHER" id="PTHR11691">
    <property type="entry name" value="TYPE I INTERFERON"/>
    <property type="match status" value="1"/>
</dbReference>
<dbReference type="Pfam" id="PF00143">
    <property type="entry name" value="Interferon"/>
    <property type="match status" value="1"/>
</dbReference>
<dbReference type="SMART" id="SM00076">
    <property type="entry name" value="IFabd"/>
    <property type="match status" value="1"/>
</dbReference>
<dbReference type="SUPFAM" id="SSF47266">
    <property type="entry name" value="4-helical cytokines"/>
    <property type="match status" value="1"/>
</dbReference>
<gene>
    <name evidence="8" type="primary">ifna3</name>
</gene>
<feature type="signal peptide" evidence="1">
    <location>
        <begin position="1"/>
        <end position="23"/>
    </location>
</feature>
<feature type="chain" id="PRO_0000432615" description="Interferon a3">
    <location>
        <begin position="24"/>
        <end position="175"/>
    </location>
</feature>
<feature type="disulfide bond" evidence="11">
    <location>
        <begin position="24"/>
        <end position="120"/>
    </location>
</feature>
<feature type="splice variant" id="VSP_057532" description="In isoform 2." evidence="10">
    <location>
        <begin position="1"/>
        <end position="16"/>
    </location>
</feature>
<feature type="splice variant" id="VSP_057533" description="In isoform 3." evidence="10">
    <original>MYTMQSWSCIFLIICS</original>
    <variation>MRRGRHGIPSATCASPENESPRLR</variation>
    <location>
        <begin position="1"/>
        <end position="16"/>
    </location>
</feature>
<feature type="sequence conflict" description="In Ref. 1; ACJ03566/ACJ03567 and 2; CAM28538." evidence="9" ref="1 2">
    <original>I</original>
    <variation>M</variation>
    <location>
        <position position="160"/>
    </location>
</feature>
<name>IFNA3_ONCMY</name>
<protein>
    <recommendedName>
        <fullName evidence="8">Interferon a3</fullName>
    </recommendedName>
    <alternativeName>
        <fullName evidence="5">Type I interferon 1</fullName>
        <shortName evidence="5">rtIFN1</shortName>
    </alternativeName>
    <alternativeName>
        <fullName evidence="8">Type I interferon a3</fullName>
        <shortName>IFN1-a3</shortName>
    </alternativeName>
</protein>
<reference key="1">
    <citation type="journal article" date="2007" name="J. Immunol.">
        <title>Identification of a second group of type I IFNs in fish sheds light on IFN evolution in vertebrates.</title>
        <authorList>
            <person name="Zou J."/>
            <person name="Tafalla C."/>
            <person name="Truckle J."/>
            <person name="Secombes C.J."/>
        </authorList>
    </citation>
    <scope>NUCLEOTIDE SEQUENCE [GENOMIC DNA]</scope>
</reference>
<reference key="2">
    <citation type="journal article" date="2009" name="Fish Shellfish Immunol.">
        <title>Characterization of the interferon genes in homozygous rainbow trout reveals two novel genes, alternate splicing and differential regulation of duplicated genes.</title>
        <authorList>
            <person name="Purcell M.K."/>
            <person name="Laing K.J."/>
            <person name="Woodson J.C."/>
            <person name="Thorgaard G.H."/>
            <person name="Hansen J.D."/>
        </authorList>
    </citation>
    <scope>NUCLEOTIDE SEQUENCE [MRNA] (ISOFORMS 1 AND 2)</scope>
    <scope>TISSUE SPECIFICITY</scope>
    <scope>INDUCTION BY POLY(I:C) AND IHNV</scope>
</reference>
<reference key="3">
    <citation type="journal article" date="2014" name="J. Immunol.">
        <title>Salmonids have an extraordinary complex type I IFN system: characterization of the IFN locus in rainbow trout oncorhynchus mykiss reveals two novel IFN subgroups.</title>
        <authorList>
            <person name="Zou J."/>
            <person name="Gorgoglione B."/>
            <person name="Taylor N.G."/>
            <person name="Summathed T."/>
            <person name="Lee P.T."/>
            <person name="Panigrahi A."/>
            <person name="Genet C."/>
            <person name="Chen Y.M."/>
            <person name="Chen T.Y."/>
            <person name="Ul Hassan M."/>
            <person name="Mughal S.M."/>
            <person name="Boudinot P."/>
            <person name="Secombes C.J."/>
        </authorList>
    </citation>
    <scope>NUCLEOTIDE SEQUENCE [MRNA] (ISOFORM 1)</scope>
    <scope>INTERFERON NOMENCLATURE</scope>
</reference>
<reference key="4">
    <citation type="journal article" date="2013" name="PLoS Pathog.">
        <title>Intracellular interferons in fish: a unique means to combat viral infection.</title>
        <authorList>
            <person name="Chang M.X."/>
            <person name="Zou J."/>
            <person name="Nie P."/>
            <person name="Huang B."/>
            <person name="Yu Z."/>
            <person name="Collet B."/>
            <person name="Secombes C.J."/>
        </authorList>
    </citation>
    <scope>FUNCTION</scope>
    <scope>ALTERNATIVE SPLICING (ISOFORMS 1; 2 AND 3)</scope>
    <scope>INDUCTION BY POLY(I:C) AND VHSV</scope>
    <scope>SUBCELLULAR LOCATION (ISOFORMS 1; 2 AND 3)</scope>
</reference>